<comment type="PTM">
    <text evidence="1">The N-terminus is cleaved by ribosomal processing cysteine protease Prp.</text>
</comment>
<comment type="similarity">
    <text evidence="2">Belongs to the bacterial ribosomal protein bL27 family.</text>
</comment>
<feature type="propeptide" id="PRO_0000459844" evidence="1">
    <location>
        <begin position="1"/>
        <end position="9"/>
    </location>
</feature>
<feature type="chain" id="PRO_1000128689" description="Large ribosomal subunit protein bL27">
    <location>
        <begin position="10"/>
        <end position="96"/>
    </location>
</feature>
<accession>B7GIR0</accession>
<name>RL27_ANOFW</name>
<organism>
    <name type="scientific">Anoxybacillus flavithermus (strain DSM 21510 / WK1)</name>
    <dbReference type="NCBI Taxonomy" id="491915"/>
    <lineage>
        <taxon>Bacteria</taxon>
        <taxon>Bacillati</taxon>
        <taxon>Bacillota</taxon>
        <taxon>Bacilli</taxon>
        <taxon>Bacillales</taxon>
        <taxon>Anoxybacillaceae</taxon>
        <taxon>Anoxybacillus</taxon>
    </lineage>
</organism>
<gene>
    <name evidence="2" type="primary">rpmA</name>
    <name type="ordered locus">Aflv_0696</name>
</gene>
<protein>
    <recommendedName>
        <fullName evidence="2">Large ribosomal subunit protein bL27</fullName>
    </recommendedName>
    <alternativeName>
        <fullName evidence="3">50S ribosomal protein L27</fullName>
    </alternativeName>
</protein>
<keyword id="KW-0687">Ribonucleoprotein</keyword>
<keyword id="KW-0689">Ribosomal protein</keyword>
<reference key="1">
    <citation type="journal article" date="2008" name="Genome Biol.">
        <title>Encapsulated in silica: genome, proteome and physiology of the thermophilic bacterium Anoxybacillus flavithermus WK1.</title>
        <authorList>
            <person name="Saw J.H."/>
            <person name="Mountain B.W."/>
            <person name="Feng L."/>
            <person name="Omelchenko M.V."/>
            <person name="Hou S."/>
            <person name="Saito J.A."/>
            <person name="Stott M.B."/>
            <person name="Li D."/>
            <person name="Zhao G."/>
            <person name="Wu J."/>
            <person name="Galperin M.Y."/>
            <person name="Koonin E.V."/>
            <person name="Makarova K.S."/>
            <person name="Wolf Y.I."/>
            <person name="Rigden D.J."/>
            <person name="Dunfield P.F."/>
            <person name="Wang L."/>
            <person name="Alam M."/>
        </authorList>
    </citation>
    <scope>NUCLEOTIDE SEQUENCE [LARGE SCALE GENOMIC DNA]</scope>
    <source>
        <strain>DSM 21510 / WK1</strain>
    </source>
</reference>
<evidence type="ECO:0000250" key="1">
    <source>
        <dbReference type="UniProtKB" id="Q2FXT0"/>
    </source>
</evidence>
<evidence type="ECO:0000255" key="2">
    <source>
        <dbReference type="HAMAP-Rule" id="MF_00539"/>
    </source>
</evidence>
<evidence type="ECO:0000305" key="3"/>
<proteinExistence type="inferred from homology"/>
<sequence length="96" mass="10594">MLRLDLQFFASKKGVGSTKNGRDSIAKRLGAKRADGQFVTGGSILYRQRGTKIYPGLNVGRGGDDTLYAKVDGIVRFERMGRDRKKVSVYPVVKEA</sequence>
<dbReference type="EMBL" id="CP000922">
    <property type="protein sequence ID" value="ACJ33075.1"/>
    <property type="molecule type" value="Genomic_DNA"/>
</dbReference>
<dbReference type="RefSeq" id="WP_003396301.1">
    <property type="nucleotide sequence ID" value="NC_011567.1"/>
</dbReference>
<dbReference type="SMR" id="B7GIR0"/>
<dbReference type="STRING" id="491915.Aflv_0696"/>
<dbReference type="GeneID" id="7036953"/>
<dbReference type="KEGG" id="afl:Aflv_0696"/>
<dbReference type="eggNOG" id="COG0211">
    <property type="taxonomic scope" value="Bacteria"/>
</dbReference>
<dbReference type="HOGENOM" id="CLU_095424_4_0_9"/>
<dbReference type="Proteomes" id="UP000000742">
    <property type="component" value="Chromosome"/>
</dbReference>
<dbReference type="GO" id="GO:0022625">
    <property type="term" value="C:cytosolic large ribosomal subunit"/>
    <property type="evidence" value="ECO:0007669"/>
    <property type="project" value="TreeGrafter"/>
</dbReference>
<dbReference type="GO" id="GO:0003735">
    <property type="term" value="F:structural constituent of ribosome"/>
    <property type="evidence" value="ECO:0007669"/>
    <property type="project" value="InterPro"/>
</dbReference>
<dbReference type="GO" id="GO:0006412">
    <property type="term" value="P:translation"/>
    <property type="evidence" value="ECO:0007669"/>
    <property type="project" value="UniProtKB-UniRule"/>
</dbReference>
<dbReference type="FunFam" id="2.40.50.100:FF:000004">
    <property type="entry name" value="50S ribosomal protein L27"/>
    <property type="match status" value="1"/>
</dbReference>
<dbReference type="Gene3D" id="2.40.50.100">
    <property type="match status" value="1"/>
</dbReference>
<dbReference type="HAMAP" id="MF_00539">
    <property type="entry name" value="Ribosomal_bL27"/>
    <property type="match status" value="1"/>
</dbReference>
<dbReference type="InterPro" id="IPR001684">
    <property type="entry name" value="Ribosomal_bL27"/>
</dbReference>
<dbReference type="InterPro" id="IPR018261">
    <property type="entry name" value="Ribosomal_bL27_CS"/>
</dbReference>
<dbReference type="NCBIfam" id="TIGR00062">
    <property type="entry name" value="L27"/>
    <property type="match status" value="1"/>
</dbReference>
<dbReference type="PANTHER" id="PTHR15893:SF0">
    <property type="entry name" value="LARGE RIBOSOMAL SUBUNIT PROTEIN BL27M"/>
    <property type="match status" value="1"/>
</dbReference>
<dbReference type="PANTHER" id="PTHR15893">
    <property type="entry name" value="RIBOSOMAL PROTEIN L27"/>
    <property type="match status" value="1"/>
</dbReference>
<dbReference type="Pfam" id="PF01016">
    <property type="entry name" value="Ribosomal_L27"/>
    <property type="match status" value="1"/>
</dbReference>
<dbReference type="PRINTS" id="PR00063">
    <property type="entry name" value="RIBOSOMALL27"/>
</dbReference>
<dbReference type="SUPFAM" id="SSF110324">
    <property type="entry name" value="Ribosomal L27 protein-like"/>
    <property type="match status" value="1"/>
</dbReference>
<dbReference type="PROSITE" id="PS00831">
    <property type="entry name" value="RIBOSOMAL_L27"/>
    <property type="match status" value="1"/>
</dbReference>